<comment type="function">
    <text evidence="1 6 7 9 10">Dual specificity kinase acting on both serine/threonine and tyrosine-containing substrates (PubMed:1825055, PubMed:1986248, PubMed:9307018). Phosphorylates serine- and arginine-rich (SR) proteins of the spliceosomal complex and may be a constituent of a network of regulatory mechanisms that enable SR proteins to control RNA splicing. Phosphorylates: SRSF1, SRSF3 and PTPN1 (PubMed:8617202, PubMed:9307018). Regulates the alternative splicing of tissue factor (F3) pre-mRNA in endothelial cells (By similarity).</text>
</comment>
<comment type="catalytic activity">
    <reaction evidence="6 7 10">
        <text>L-seryl-[protein] + ATP = O-phospho-L-seryl-[protein] + ADP + H(+)</text>
        <dbReference type="Rhea" id="RHEA:17989"/>
        <dbReference type="Rhea" id="RHEA-COMP:9863"/>
        <dbReference type="Rhea" id="RHEA-COMP:11604"/>
        <dbReference type="ChEBI" id="CHEBI:15378"/>
        <dbReference type="ChEBI" id="CHEBI:29999"/>
        <dbReference type="ChEBI" id="CHEBI:30616"/>
        <dbReference type="ChEBI" id="CHEBI:83421"/>
        <dbReference type="ChEBI" id="CHEBI:456216"/>
        <dbReference type="EC" id="2.7.12.1"/>
    </reaction>
    <physiologicalReaction direction="left-to-right" evidence="6">
        <dbReference type="Rhea" id="RHEA:17990"/>
    </physiologicalReaction>
</comment>
<comment type="catalytic activity">
    <reaction evidence="6 7">
        <text>L-threonyl-[protein] + ATP = O-phospho-L-threonyl-[protein] + ADP + H(+)</text>
        <dbReference type="Rhea" id="RHEA:46608"/>
        <dbReference type="Rhea" id="RHEA-COMP:11060"/>
        <dbReference type="Rhea" id="RHEA-COMP:11605"/>
        <dbReference type="ChEBI" id="CHEBI:15378"/>
        <dbReference type="ChEBI" id="CHEBI:30013"/>
        <dbReference type="ChEBI" id="CHEBI:30616"/>
        <dbReference type="ChEBI" id="CHEBI:61977"/>
        <dbReference type="ChEBI" id="CHEBI:456216"/>
        <dbReference type="EC" id="2.7.12.1"/>
    </reaction>
    <physiologicalReaction direction="left-to-right" evidence="17">
        <dbReference type="Rhea" id="RHEA:46609"/>
    </physiologicalReaction>
</comment>
<comment type="catalytic activity">
    <reaction evidence="6 7">
        <text>L-tyrosyl-[protein] + ATP = O-phospho-L-tyrosyl-[protein] + ADP + H(+)</text>
        <dbReference type="Rhea" id="RHEA:10596"/>
        <dbReference type="Rhea" id="RHEA-COMP:10136"/>
        <dbReference type="Rhea" id="RHEA-COMP:20101"/>
        <dbReference type="ChEBI" id="CHEBI:15378"/>
        <dbReference type="ChEBI" id="CHEBI:30616"/>
        <dbReference type="ChEBI" id="CHEBI:46858"/>
        <dbReference type="ChEBI" id="CHEBI:61978"/>
        <dbReference type="ChEBI" id="CHEBI:456216"/>
        <dbReference type="EC" id="2.7.12.1"/>
    </reaction>
    <physiologicalReaction direction="left-to-right" evidence="17">
        <dbReference type="Rhea" id="RHEA:10597"/>
    </physiologicalReaction>
</comment>
<comment type="activity regulation">
    <text evidence="8 11">Regulates splicing of its own pre-mRNA according to its kinase activity; increased expression of the catalytically active form influences splicing to generate the catalytically inactive splicing variant lacking the kinase domain. Leucettine L41 inhibits its kinase activity and affects the regulation of alternative splicing mediated by phosphorylation of SR proteins.</text>
</comment>
<comment type="subunit">
    <text evidence="1">Interacts with PPIG and UBL5.</text>
</comment>
<comment type="interaction">
    <interactant intactId="EBI-6479117">
        <id>P22518</id>
    </interactant>
    <interactant intactId="EBI-6402540">
        <id>Q5ZRQ0</id>
        <label>lubX</label>
    </interactant>
    <organismsDiffer>true</organismsDiffer>
    <experiments>3</experiments>
</comment>
<comment type="subcellular location">
    <subcellularLocation>
        <location evidence="9 10">Nucleus</location>
    </subcellularLocation>
</comment>
<comment type="alternative products">
    <event type="alternative splicing"/>
    <isoform>
        <id>P22518-1</id>
        <name>Long</name>
        <sequence type="displayed"/>
    </isoform>
    <isoform>
        <id>P22518-2</id>
        <name>Short</name>
        <name>Clk1T</name>
        <sequence type="described" ref="VSP_004854 VSP_004855"/>
    </isoform>
</comment>
<comment type="PTM">
    <text evidence="10">Autophosphorylates on all three types of residues.</text>
</comment>
<comment type="miscellaneous">
    <molecule>Isoform Short</molecule>
    <text evidence="16">Lacks the kinase domain.</text>
</comment>
<comment type="similarity">
    <text evidence="16">Belongs to the protein kinase superfamily. CMGC Ser/Thr protein kinase family. Lammer subfamily.</text>
</comment>
<organism>
    <name type="scientific">Mus musculus</name>
    <name type="common">Mouse</name>
    <dbReference type="NCBI Taxonomy" id="10090"/>
    <lineage>
        <taxon>Eukaryota</taxon>
        <taxon>Metazoa</taxon>
        <taxon>Chordata</taxon>
        <taxon>Craniata</taxon>
        <taxon>Vertebrata</taxon>
        <taxon>Euteleostomi</taxon>
        <taxon>Mammalia</taxon>
        <taxon>Eutheria</taxon>
        <taxon>Euarchontoglires</taxon>
        <taxon>Glires</taxon>
        <taxon>Rodentia</taxon>
        <taxon>Myomorpha</taxon>
        <taxon>Muroidea</taxon>
        <taxon>Muridae</taxon>
        <taxon>Murinae</taxon>
        <taxon>Mus</taxon>
        <taxon>Mus</taxon>
    </lineage>
</organism>
<protein>
    <recommendedName>
        <fullName evidence="17">Dual specificity protein kinase CLK1</fullName>
        <ecNumber evidence="6 7 10">2.7.12.1</ecNumber>
    </recommendedName>
    <alternativeName>
        <fullName evidence="18">CDC-like kinase 1</fullName>
    </alternativeName>
    <alternativeName>
        <fullName evidence="13">Protein kinase STY</fullName>
    </alternativeName>
</protein>
<sequence>MRHSKRTYCPDWDERDWDYGTWRSSSSHKRKKRSHSSAREQKRCRYDHSKTTDSYYLESRSINEKAYHSRRYVDEYRNDYMGYEPGHPYGEPGSRYQMHSSKSSGRSGRSSYKSKHRSRHHTSQHHSHGKSHRRKRSRSVEDDEEGHLICQSGDVLSARYEIVDTLGEGAFGKVVECIDHKVGGRRVAVKIVKNVDRYCEAAQSEIQVLEHLNTTDPHSTFRCVQMLEWFEHRGHICIVFELLGLSTYDFIKENSFLPFRMDHIRKMAYQICKSVNFLHSNKLTHTDLKPENILFVKSDYTEAYNPKMKRDERTIVNPDIKVVDFGSATYDDEHHSTLVSTRHYRAPEVILALGWSQPCDVWSIGCILIEYYLGFTVFPTHDSREHLAMMERILGPLPKHMIQKTRKRRYFHHDRLDWDEHSSAGRYVSRRCKPLKEFMLSQDAEHELLFDLIGKMLEYDPAKRITLKEALKHPFFYPLKKHT</sequence>
<proteinExistence type="evidence at protein level"/>
<dbReference type="EC" id="2.7.12.1" evidence="6 7 10"/>
<dbReference type="EMBL" id="X57186">
    <property type="protein sequence ID" value="CAA40473.1"/>
    <property type="molecule type" value="mRNA"/>
</dbReference>
<dbReference type="EMBL" id="M38381">
    <property type="protein sequence ID" value="AAA40151.1"/>
    <property type="molecule type" value="mRNA"/>
</dbReference>
<dbReference type="EMBL" id="U21209">
    <property type="protein sequence ID" value="AAC52257.1"/>
    <property type="molecule type" value="mRNA"/>
</dbReference>
<dbReference type="EMBL" id="L29221">
    <property type="protein sequence ID" value="AAA61485.1"/>
    <property type="molecule type" value="mRNA"/>
</dbReference>
<dbReference type="EMBL" id="AK135765">
    <property type="protein sequence ID" value="BAE22647.1"/>
    <property type="molecule type" value="mRNA"/>
</dbReference>
<dbReference type="EMBL" id="CH466548">
    <property type="protein sequence ID" value="EDL00074.1"/>
    <property type="molecule type" value="Genomic_DNA"/>
</dbReference>
<dbReference type="EMBL" id="BC145905">
    <property type="protein sequence ID" value="AAI45906.1"/>
    <property type="molecule type" value="mRNA"/>
</dbReference>
<dbReference type="EMBL" id="BC145911">
    <property type="protein sequence ID" value="AAI45912.1"/>
    <property type="molecule type" value="mRNA"/>
</dbReference>
<dbReference type="CCDS" id="CCDS35577.1">
    <molecule id="P22518-1"/>
</dbReference>
<dbReference type="PIR" id="A39676">
    <property type="entry name" value="A39676"/>
</dbReference>
<dbReference type="PIR" id="I49275">
    <property type="entry name" value="I49275"/>
</dbReference>
<dbReference type="RefSeq" id="NP_001036099.1">
    <molecule id="P22518-1"/>
    <property type="nucleotide sequence ID" value="NM_001042634.2"/>
</dbReference>
<dbReference type="SMR" id="P22518"/>
<dbReference type="BioGRID" id="198751">
    <property type="interactions" value="9"/>
</dbReference>
<dbReference type="FunCoup" id="P22518">
    <property type="interactions" value="3574"/>
</dbReference>
<dbReference type="IntAct" id="P22518">
    <property type="interactions" value="2"/>
</dbReference>
<dbReference type="MINT" id="P22518"/>
<dbReference type="STRING" id="10090.ENSMUSP00000034868"/>
<dbReference type="BindingDB" id="P22518"/>
<dbReference type="ChEMBL" id="CHEMBL1075280"/>
<dbReference type="GuidetoPHARMACOLOGY" id="1990"/>
<dbReference type="GlyGen" id="P22518">
    <property type="glycosylation" value="1 site, 1 N-linked glycan (1 site)"/>
</dbReference>
<dbReference type="iPTMnet" id="P22518"/>
<dbReference type="PhosphoSitePlus" id="P22518"/>
<dbReference type="jPOST" id="P22518"/>
<dbReference type="PaxDb" id="10090-ENSMUSP00000034868"/>
<dbReference type="PeptideAtlas" id="P22518"/>
<dbReference type="ProteomicsDB" id="283524">
    <molecule id="P22518-1"/>
</dbReference>
<dbReference type="ProteomicsDB" id="283525">
    <molecule id="P22518-2"/>
</dbReference>
<dbReference type="Pumba" id="P22518"/>
<dbReference type="Antibodypedia" id="34923">
    <property type="antibodies" value="218 antibodies from 29 providers"/>
</dbReference>
<dbReference type="DNASU" id="12747"/>
<dbReference type="Ensembl" id="ENSMUST00000034868.14">
    <molecule id="P22518-1"/>
    <property type="protein sequence ID" value="ENSMUSP00000034868.8"/>
    <property type="gene ID" value="ENSMUSG00000026034.18"/>
</dbReference>
<dbReference type="Ensembl" id="ENSMUST00000148330.8">
    <molecule id="P22518-2"/>
    <property type="protein sequence ID" value="ENSMUSP00000137649.2"/>
    <property type="gene ID" value="ENSMUSG00000026034.18"/>
</dbReference>
<dbReference type="Ensembl" id="ENSMUST00000151338.8">
    <molecule id="P22518-2"/>
    <property type="protein sequence ID" value="ENSMUSP00000137815.2"/>
    <property type="gene ID" value="ENSMUSG00000026034.18"/>
</dbReference>
<dbReference type="GeneID" id="12747"/>
<dbReference type="KEGG" id="mmu:12747"/>
<dbReference type="UCSC" id="uc007bbs.2">
    <molecule id="P22518-1"/>
    <property type="organism name" value="mouse"/>
</dbReference>
<dbReference type="AGR" id="MGI:107403"/>
<dbReference type="CTD" id="1195"/>
<dbReference type="MGI" id="MGI:107403">
    <property type="gene designation" value="Clk1"/>
</dbReference>
<dbReference type="VEuPathDB" id="HostDB:ENSMUSG00000026034"/>
<dbReference type="eggNOG" id="KOG0671">
    <property type="taxonomic scope" value="Eukaryota"/>
</dbReference>
<dbReference type="GeneTree" id="ENSGT00940000159722"/>
<dbReference type="HOGENOM" id="CLU_000288_5_16_1"/>
<dbReference type="InParanoid" id="P22518"/>
<dbReference type="OMA" id="HENGYHN"/>
<dbReference type="OrthoDB" id="283111at2759"/>
<dbReference type="PhylomeDB" id="P22518"/>
<dbReference type="TreeFam" id="TF101041"/>
<dbReference type="BRENDA" id="2.7.12.1">
    <property type="organism ID" value="3474"/>
</dbReference>
<dbReference type="BioGRID-ORCS" id="12747">
    <property type="hits" value="2 hits in 78 CRISPR screens"/>
</dbReference>
<dbReference type="ChiTaRS" id="Clk1">
    <property type="organism name" value="mouse"/>
</dbReference>
<dbReference type="PRO" id="PR:P22518"/>
<dbReference type="Proteomes" id="UP000000589">
    <property type="component" value="Chromosome 1"/>
</dbReference>
<dbReference type="RNAct" id="P22518">
    <property type="molecule type" value="protein"/>
</dbReference>
<dbReference type="Bgee" id="ENSMUSG00000026034">
    <property type="expression patterns" value="Expressed in secondary palatal shelf and 263 other cell types or tissues"/>
</dbReference>
<dbReference type="GO" id="GO:0005634">
    <property type="term" value="C:nucleus"/>
    <property type="evidence" value="ECO:0000314"/>
    <property type="project" value="MGI"/>
</dbReference>
<dbReference type="GO" id="GO:0005524">
    <property type="term" value="F:ATP binding"/>
    <property type="evidence" value="ECO:0007669"/>
    <property type="project" value="UniProtKB-KW"/>
</dbReference>
<dbReference type="GO" id="GO:0106310">
    <property type="term" value="F:protein serine kinase activity"/>
    <property type="evidence" value="ECO:0007669"/>
    <property type="project" value="RHEA"/>
</dbReference>
<dbReference type="GO" id="GO:0004674">
    <property type="term" value="F:protein serine/threonine kinase activity"/>
    <property type="evidence" value="ECO:0000314"/>
    <property type="project" value="MGI"/>
</dbReference>
<dbReference type="GO" id="GO:0004712">
    <property type="term" value="F:protein serine/threonine/tyrosine kinase activity"/>
    <property type="evidence" value="ECO:0007669"/>
    <property type="project" value="UniProtKB-EC"/>
</dbReference>
<dbReference type="GO" id="GO:0004713">
    <property type="term" value="F:protein tyrosine kinase activity"/>
    <property type="evidence" value="ECO:0000314"/>
    <property type="project" value="MGI"/>
</dbReference>
<dbReference type="GO" id="GO:0043484">
    <property type="term" value="P:regulation of RNA splicing"/>
    <property type="evidence" value="ECO:0007669"/>
    <property type="project" value="Ensembl"/>
</dbReference>
<dbReference type="CDD" id="cd14213">
    <property type="entry name" value="PKc_CLK1_4"/>
    <property type="match status" value="1"/>
</dbReference>
<dbReference type="FunFam" id="3.30.200.20:FF:000061">
    <property type="entry name" value="Dual specificity protein kinase CLK2"/>
    <property type="match status" value="1"/>
</dbReference>
<dbReference type="FunFam" id="1.10.510.10:FF:000220">
    <property type="entry name" value="dual specificity protein kinase CLK4 isoform X1"/>
    <property type="match status" value="1"/>
</dbReference>
<dbReference type="Gene3D" id="3.30.200.20">
    <property type="entry name" value="Phosphorylase Kinase, domain 1"/>
    <property type="match status" value="1"/>
</dbReference>
<dbReference type="Gene3D" id="1.10.510.10">
    <property type="entry name" value="Transferase(Phosphotransferase) domain 1"/>
    <property type="match status" value="1"/>
</dbReference>
<dbReference type="InterPro" id="IPR051175">
    <property type="entry name" value="CLK_kinases"/>
</dbReference>
<dbReference type="InterPro" id="IPR011009">
    <property type="entry name" value="Kinase-like_dom_sf"/>
</dbReference>
<dbReference type="InterPro" id="IPR000719">
    <property type="entry name" value="Prot_kinase_dom"/>
</dbReference>
<dbReference type="InterPro" id="IPR017441">
    <property type="entry name" value="Protein_kinase_ATP_BS"/>
</dbReference>
<dbReference type="InterPro" id="IPR008271">
    <property type="entry name" value="Ser/Thr_kinase_AS"/>
</dbReference>
<dbReference type="PANTHER" id="PTHR45646:SF4">
    <property type="entry name" value="DUAL SPECIFICITY PROTEIN KINASE CLK1"/>
    <property type="match status" value="1"/>
</dbReference>
<dbReference type="PANTHER" id="PTHR45646">
    <property type="entry name" value="SERINE/THREONINE-PROTEIN KINASE DOA-RELATED"/>
    <property type="match status" value="1"/>
</dbReference>
<dbReference type="Pfam" id="PF00069">
    <property type="entry name" value="Pkinase"/>
    <property type="match status" value="1"/>
</dbReference>
<dbReference type="SMART" id="SM00220">
    <property type="entry name" value="S_TKc"/>
    <property type="match status" value="1"/>
</dbReference>
<dbReference type="SUPFAM" id="SSF56112">
    <property type="entry name" value="Protein kinase-like (PK-like)"/>
    <property type="match status" value="1"/>
</dbReference>
<dbReference type="PROSITE" id="PS00107">
    <property type="entry name" value="PROTEIN_KINASE_ATP"/>
    <property type="match status" value="1"/>
</dbReference>
<dbReference type="PROSITE" id="PS50011">
    <property type="entry name" value="PROTEIN_KINASE_DOM"/>
    <property type="match status" value="1"/>
</dbReference>
<dbReference type="PROSITE" id="PS00108">
    <property type="entry name" value="PROTEIN_KINASE_ST"/>
    <property type="match status" value="1"/>
</dbReference>
<reference key="1">
    <citation type="journal article" date="1991" name="EMBO J.">
        <title>A mammalian protein kinase with potential for serine/threonine and tyrosine phosphorylation is related to cell cycle regulators.</title>
        <authorList>
            <person name="Ben-David Y."/>
            <person name="Letwin K."/>
            <person name="Tannock L."/>
            <person name="Bernstein A."/>
            <person name="Pawson T."/>
        </authorList>
    </citation>
    <scope>NUCLEOTIDE SEQUENCE [MRNA] (ISOFORM LONG)</scope>
    <scope>FUNCTION</scope>
    <scope>CATALYTIC ACTIVITY</scope>
    <scope>MUTAGENESIS OF LYS-190</scope>
</reference>
<reference key="2">
    <citation type="journal article" date="1991" name="Mol. Cell. Biol.">
        <title>STY, a tyrosine-phosphorylating enzyme with sequence homology to serine/threonine kinases.</title>
        <authorList>
            <person name="Howell B.W."/>
            <person name="Afar D.E."/>
            <person name="Lew J."/>
            <person name="Douville E.M."/>
            <person name="Icely P.L."/>
            <person name="Gray D.A."/>
            <person name="Bell J.C."/>
        </authorList>
    </citation>
    <scope>NUCLEOTIDE SEQUENCE [MRNA]</scope>
    <scope>FUNCTION</scope>
    <scope>CATALYTIC ACTIVITY</scope>
</reference>
<reference key="3">
    <citation type="journal article" date="1995" name="J. Biol. Chem.">
        <title>Alternative splicing of STY, a nuclear dual specificity kinase.</title>
        <authorList>
            <person name="Duncan P.I."/>
            <person name="Howell B.W."/>
            <person name="Marius R.M."/>
            <person name="Drmanic S."/>
            <person name="Douville E.M."/>
            <person name="Bell J.C."/>
        </authorList>
    </citation>
    <scope>NUCLEOTIDE SEQUENCE [MRNA] (ISOFORM SHORT)</scope>
</reference>
<reference key="4">
    <citation type="journal article" date="1994" name="J. Mol. Biol.">
        <title>Characterization by cDNA cloning of two new human protein kinases. Evidence by sequence comparison of a new family of mammalian protein kinases.</title>
        <authorList>
            <person name="Hanes J.J."/>
            <person name="der Kammer H."/>
            <person name="Klaudiny J.J."/>
            <person name="Scheit K.H."/>
        </authorList>
    </citation>
    <scope>NUCLEOTIDE SEQUENCE [MRNA] (ISOFORM SHORT)</scope>
</reference>
<reference key="5">
    <citation type="journal article" date="2005" name="Science">
        <title>The transcriptional landscape of the mammalian genome.</title>
        <authorList>
            <person name="Carninci P."/>
            <person name="Kasukawa T."/>
            <person name="Katayama S."/>
            <person name="Gough J."/>
            <person name="Frith M.C."/>
            <person name="Maeda N."/>
            <person name="Oyama R."/>
            <person name="Ravasi T."/>
            <person name="Lenhard B."/>
            <person name="Wells C."/>
            <person name="Kodzius R."/>
            <person name="Shimokawa K."/>
            <person name="Bajic V.B."/>
            <person name="Brenner S.E."/>
            <person name="Batalov S."/>
            <person name="Forrest A.R."/>
            <person name="Zavolan M."/>
            <person name="Davis M.J."/>
            <person name="Wilming L.G."/>
            <person name="Aidinis V."/>
            <person name="Allen J.E."/>
            <person name="Ambesi-Impiombato A."/>
            <person name="Apweiler R."/>
            <person name="Aturaliya R.N."/>
            <person name="Bailey T.L."/>
            <person name="Bansal M."/>
            <person name="Baxter L."/>
            <person name="Beisel K.W."/>
            <person name="Bersano T."/>
            <person name="Bono H."/>
            <person name="Chalk A.M."/>
            <person name="Chiu K.P."/>
            <person name="Choudhary V."/>
            <person name="Christoffels A."/>
            <person name="Clutterbuck D.R."/>
            <person name="Crowe M.L."/>
            <person name="Dalla E."/>
            <person name="Dalrymple B.P."/>
            <person name="de Bono B."/>
            <person name="Della Gatta G."/>
            <person name="di Bernardo D."/>
            <person name="Down T."/>
            <person name="Engstrom P."/>
            <person name="Fagiolini M."/>
            <person name="Faulkner G."/>
            <person name="Fletcher C.F."/>
            <person name="Fukushima T."/>
            <person name="Furuno M."/>
            <person name="Futaki S."/>
            <person name="Gariboldi M."/>
            <person name="Georgii-Hemming P."/>
            <person name="Gingeras T.R."/>
            <person name="Gojobori T."/>
            <person name="Green R.E."/>
            <person name="Gustincich S."/>
            <person name="Harbers M."/>
            <person name="Hayashi Y."/>
            <person name="Hensch T.K."/>
            <person name="Hirokawa N."/>
            <person name="Hill D."/>
            <person name="Huminiecki L."/>
            <person name="Iacono M."/>
            <person name="Ikeo K."/>
            <person name="Iwama A."/>
            <person name="Ishikawa T."/>
            <person name="Jakt M."/>
            <person name="Kanapin A."/>
            <person name="Katoh M."/>
            <person name="Kawasawa Y."/>
            <person name="Kelso J."/>
            <person name="Kitamura H."/>
            <person name="Kitano H."/>
            <person name="Kollias G."/>
            <person name="Krishnan S.P."/>
            <person name="Kruger A."/>
            <person name="Kummerfeld S.K."/>
            <person name="Kurochkin I.V."/>
            <person name="Lareau L.F."/>
            <person name="Lazarevic D."/>
            <person name="Lipovich L."/>
            <person name="Liu J."/>
            <person name="Liuni S."/>
            <person name="McWilliam S."/>
            <person name="Madan Babu M."/>
            <person name="Madera M."/>
            <person name="Marchionni L."/>
            <person name="Matsuda H."/>
            <person name="Matsuzawa S."/>
            <person name="Miki H."/>
            <person name="Mignone F."/>
            <person name="Miyake S."/>
            <person name="Morris K."/>
            <person name="Mottagui-Tabar S."/>
            <person name="Mulder N."/>
            <person name="Nakano N."/>
            <person name="Nakauchi H."/>
            <person name="Ng P."/>
            <person name="Nilsson R."/>
            <person name="Nishiguchi S."/>
            <person name="Nishikawa S."/>
            <person name="Nori F."/>
            <person name="Ohara O."/>
            <person name="Okazaki Y."/>
            <person name="Orlando V."/>
            <person name="Pang K.C."/>
            <person name="Pavan W.J."/>
            <person name="Pavesi G."/>
            <person name="Pesole G."/>
            <person name="Petrovsky N."/>
            <person name="Piazza S."/>
            <person name="Reed J."/>
            <person name="Reid J.F."/>
            <person name="Ring B.Z."/>
            <person name="Ringwald M."/>
            <person name="Rost B."/>
            <person name="Ruan Y."/>
            <person name="Salzberg S.L."/>
            <person name="Sandelin A."/>
            <person name="Schneider C."/>
            <person name="Schoenbach C."/>
            <person name="Sekiguchi K."/>
            <person name="Semple C.A."/>
            <person name="Seno S."/>
            <person name="Sessa L."/>
            <person name="Sheng Y."/>
            <person name="Shibata Y."/>
            <person name="Shimada H."/>
            <person name="Shimada K."/>
            <person name="Silva D."/>
            <person name="Sinclair B."/>
            <person name="Sperling S."/>
            <person name="Stupka E."/>
            <person name="Sugiura K."/>
            <person name="Sultana R."/>
            <person name="Takenaka Y."/>
            <person name="Taki K."/>
            <person name="Tammoja K."/>
            <person name="Tan S.L."/>
            <person name="Tang S."/>
            <person name="Taylor M.S."/>
            <person name="Tegner J."/>
            <person name="Teichmann S.A."/>
            <person name="Ueda H.R."/>
            <person name="van Nimwegen E."/>
            <person name="Verardo R."/>
            <person name="Wei C.L."/>
            <person name="Yagi K."/>
            <person name="Yamanishi H."/>
            <person name="Zabarovsky E."/>
            <person name="Zhu S."/>
            <person name="Zimmer A."/>
            <person name="Hide W."/>
            <person name="Bult C."/>
            <person name="Grimmond S.M."/>
            <person name="Teasdale R.D."/>
            <person name="Liu E.T."/>
            <person name="Brusic V."/>
            <person name="Quackenbush J."/>
            <person name="Wahlestedt C."/>
            <person name="Mattick J.S."/>
            <person name="Hume D.A."/>
            <person name="Kai C."/>
            <person name="Sasaki D."/>
            <person name="Tomaru Y."/>
            <person name="Fukuda S."/>
            <person name="Kanamori-Katayama M."/>
            <person name="Suzuki M."/>
            <person name="Aoki J."/>
            <person name="Arakawa T."/>
            <person name="Iida J."/>
            <person name="Imamura K."/>
            <person name="Itoh M."/>
            <person name="Kato T."/>
            <person name="Kawaji H."/>
            <person name="Kawagashira N."/>
            <person name="Kawashima T."/>
            <person name="Kojima M."/>
            <person name="Kondo S."/>
            <person name="Konno H."/>
            <person name="Nakano K."/>
            <person name="Ninomiya N."/>
            <person name="Nishio T."/>
            <person name="Okada M."/>
            <person name="Plessy C."/>
            <person name="Shibata K."/>
            <person name="Shiraki T."/>
            <person name="Suzuki S."/>
            <person name="Tagami M."/>
            <person name="Waki K."/>
            <person name="Watahiki A."/>
            <person name="Okamura-Oho Y."/>
            <person name="Suzuki H."/>
            <person name="Kawai J."/>
            <person name="Hayashizaki Y."/>
        </authorList>
    </citation>
    <scope>NUCLEOTIDE SEQUENCE [LARGE SCALE MRNA] (ISOFORM LONG)</scope>
    <source>
        <strain>C57BL/6J</strain>
    </source>
</reference>
<reference key="6">
    <citation type="submission" date="2005-07" db="EMBL/GenBank/DDBJ databases">
        <authorList>
            <person name="Mural R.J."/>
            <person name="Adams M.D."/>
            <person name="Myers E.W."/>
            <person name="Smith H.O."/>
            <person name="Venter J.C."/>
        </authorList>
    </citation>
    <scope>NUCLEOTIDE SEQUENCE [LARGE SCALE GENOMIC DNA]</scope>
</reference>
<reference key="7">
    <citation type="journal article" date="2004" name="Genome Res.">
        <title>The status, quality, and expansion of the NIH full-length cDNA project: the Mammalian Gene Collection (MGC).</title>
        <authorList>
            <consortium name="The MGC Project Team"/>
        </authorList>
    </citation>
    <scope>NUCLEOTIDE SEQUENCE [LARGE SCALE MRNA] (ISOFORM SHORT)</scope>
    <source>
        <tissue>Brain</tissue>
    </source>
</reference>
<reference key="8">
    <citation type="journal article" date="1996" name="EMBO J.">
        <title>The Clk/Sty protein kinase phosphorylates SR splicing factors and regulates their intranuclear distribution.</title>
        <authorList>
            <person name="Colwill K."/>
            <person name="Pawson T."/>
            <person name="Andrews B."/>
            <person name="Prasad J."/>
            <person name="Manley J.L."/>
            <person name="Bell J.C."/>
            <person name="Duncan P.I."/>
        </authorList>
    </citation>
    <scope>FUNCTION</scope>
    <scope>SUBCELLULAR LOCATION</scope>
</reference>
<reference key="9">
    <citation type="journal article" date="1997" name="Biochem. J.">
        <title>Characterization and comparison of four serine- and arginine-rich (SR) protein kinases.</title>
        <authorList>
            <person name="Nayler O."/>
            <person name="Stamm S."/>
            <person name="Ullrich A."/>
        </authorList>
    </citation>
    <scope>FUNCTION</scope>
    <scope>CATALYTIC ACTIVITY</scope>
    <scope>PHOSPHORYLATION</scope>
    <scope>SUBCELLULAR LOCATION</scope>
</reference>
<reference key="10">
    <citation type="journal article" date="1997" name="Mol. Cell. Biol.">
        <title>In vivo regulation of alternative pre-mRNA splicing by the Clk1 protein kinase.</title>
        <authorList>
            <person name="Duncan P.I."/>
            <person name="Stojdl D.F."/>
            <person name="Marius R.M."/>
            <person name="Bell J.C."/>
        </authorList>
    </citation>
    <scope>FUNCTION</scope>
    <scope>ACTIVITY REGULATION</scope>
</reference>
<reference key="11">
    <citation type="journal article" date="2007" name="Proc. Natl. Acad. Sci. U.S.A.">
        <title>Large-scale phosphorylation analysis of mouse liver.</title>
        <authorList>
            <person name="Villen J."/>
            <person name="Beausoleil S.A."/>
            <person name="Gerber S.A."/>
            <person name="Gygi S.P."/>
        </authorList>
    </citation>
    <scope>PHOSPHORYLATION [LARGE SCALE ANALYSIS] AT SER-139</scope>
    <scope>IDENTIFICATION BY MASS SPECTROMETRY [LARGE SCALE ANALYSIS]</scope>
    <source>
        <tissue>Liver</tissue>
    </source>
</reference>
<reference key="12">
    <citation type="journal article" date="2010" name="Cell">
        <title>A tissue-specific atlas of mouse protein phosphorylation and expression.</title>
        <authorList>
            <person name="Huttlin E.L."/>
            <person name="Jedrychowski M.P."/>
            <person name="Elias J.E."/>
            <person name="Goswami T."/>
            <person name="Rad R."/>
            <person name="Beausoleil S.A."/>
            <person name="Villen J."/>
            <person name="Haas W."/>
            <person name="Sowa M.E."/>
            <person name="Gygi S.P."/>
        </authorList>
    </citation>
    <scope>PHOSPHORYLATION [LARGE SCALE ANALYSIS] AT SER-139</scope>
    <scope>IDENTIFICATION BY MASS SPECTROMETRY [LARGE SCALE ANALYSIS]</scope>
    <source>
        <tissue>Brain</tissue>
        <tissue>Kidney</tissue>
        <tissue>Liver</tissue>
        <tissue>Lung</tissue>
        <tissue>Pancreas</tissue>
        <tissue>Spleen</tissue>
        <tissue>Testis</tissue>
    </source>
</reference>
<reference key="13">
    <citation type="journal article" date="2011" name="J. Med. Chem.">
        <title>Leucettines, a class of potent inhibitors of cdc2-like kinases and dual specificity, tyrosine phosphorylation regulated kinases derived from the marine sponge leucettamine B: modulation of alternative pre-RNA splicing.</title>
        <authorList>
            <person name="Debdab M."/>
            <person name="Carreaux F."/>
            <person name="Renault S."/>
            <person name="Soundararajan M."/>
            <person name="Fedorov O."/>
            <person name="Filippakopoulos P."/>
            <person name="Lozach O."/>
            <person name="Babault L."/>
            <person name="Tahtouh T."/>
            <person name="Baratte B."/>
            <person name="Ogawa Y."/>
            <person name="Hagiwara M."/>
            <person name="Eisenreich A."/>
            <person name="Rauch U."/>
            <person name="Knapp S."/>
            <person name="Meijer L."/>
            <person name="Bazureau J.P."/>
        </authorList>
    </citation>
    <scope>ACTIVITY REGULATION</scope>
</reference>
<gene>
    <name evidence="18" type="primary">Clk1</name>
    <name type="synonym">Clk</name>
    <name evidence="13" type="synonym">Sty</name>
</gene>
<accession>P22518</accession>
<accession>A6H6K2</accession>
<accession>Q3UXB6</accession>
<name>CLK1_MOUSE</name>
<keyword id="KW-0025">Alternative splicing</keyword>
<keyword id="KW-0067">ATP-binding</keyword>
<keyword id="KW-0418">Kinase</keyword>
<keyword id="KW-0547">Nucleotide-binding</keyword>
<keyword id="KW-0539">Nucleus</keyword>
<keyword id="KW-0597">Phosphoprotein</keyword>
<keyword id="KW-1185">Reference proteome</keyword>
<keyword id="KW-0723">Serine/threonine-protein kinase</keyword>
<keyword id="KW-0808">Transferase</keyword>
<keyword id="KW-0829">Tyrosine-protein kinase</keyword>
<feature type="chain" id="PRO_0000085867" description="Dual specificity protein kinase CLK1">
    <location>
        <begin position="1"/>
        <end position="483"/>
    </location>
</feature>
<feature type="domain" description="Protein kinase" evidence="3">
    <location>
        <begin position="160"/>
        <end position="476"/>
    </location>
</feature>
<feature type="region of interest" description="Disordered" evidence="5">
    <location>
        <begin position="1"/>
        <end position="49"/>
    </location>
</feature>
<feature type="region of interest" description="Disordered" evidence="5">
    <location>
        <begin position="84"/>
        <end position="146"/>
    </location>
</feature>
<feature type="short sequence motif" description="Nuclear localization signal" evidence="2">
    <location>
        <begin position="29"/>
        <end position="33"/>
    </location>
</feature>
<feature type="compositionally biased region" description="Basic residues" evidence="5">
    <location>
        <begin position="26"/>
        <end position="36"/>
    </location>
</feature>
<feature type="compositionally biased region" description="Basic and acidic residues" evidence="5">
    <location>
        <begin position="37"/>
        <end position="49"/>
    </location>
</feature>
<feature type="compositionally biased region" description="Low complexity" evidence="5">
    <location>
        <begin position="84"/>
        <end position="111"/>
    </location>
</feature>
<feature type="compositionally biased region" description="Basic residues" evidence="5">
    <location>
        <begin position="112"/>
        <end position="137"/>
    </location>
</feature>
<feature type="active site" description="Proton acceptor" evidence="3 4">
    <location>
        <position position="287"/>
    </location>
</feature>
<feature type="binding site" evidence="3">
    <location>
        <begin position="166"/>
        <end position="174"/>
    </location>
    <ligand>
        <name>ATP</name>
        <dbReference type="ChEBI" id="CHEBI:30616"/>
    </ligand>
</feature>
<feature type="binding site" evidence="3">
    <location>
        <position position="190"/>
    </location>
    <ligand>
        <name>ATP</name>
        <dbReference type="ChEBI" id="CHEBI:30616"/>
    </ligand>
</feature>
<feature type="modified residue" description="Phosphoserine" evidence="1">
    <location>
        <position position="61"/>
    </location>
</feature>
<feature type="modified residue" description="Phosphoserine" evidence="19 20">
    <location>
        <position position="139"/>
    </location>
</feature>
<feature type="splice variant" id="VSP_004854" description="In isoform Short." evidence="12 14 15">
    <original>KSHRRK</original>
    <variation>MKLLIL</variation>
    <location>
        <begin position="130"/>
        <end position="135"/>
    </location>
</feature>
<feature type="splice variant" id="VSP_004855" description="In isoform Short." evidence="12 14 15">
    <location>
        <begin position="136"/>
        <end position="483"/>
    </location>
</feature>
<feature type="mutagenesis site" description="Loss of kinase activity and changed localization in the nucleus." evidence="6 9">
    <original>K</original>
    <variation>R</variation>
    <location>
        <position position="190"/>
    </location>
</feature>
<feature type="sequence conflict" description="In Ref. 2; AAA40151." evidence="16" ref="2">
    <original>P</original>
    <variation>S</variation>
    <location>
        <position position="379"/>
    </location>
</feature>
<feature type="sequence conflict" description="In Ref. 1; CAA40473." evidence="16" ref="1">
    <original>L</original>
    <variation>F</variation>
    <location>
        <position position="448"/>
    </location>
</feature>
<feature type="sequence conflict" description="In Ref. 1; CAA40473." evidence="16" ref="1">
    <original>I</original>
    <variation>V</variation>
    <location>
        <position position="453"/>
    </location>
</feature>
<feature type="sequence conflict" description="In Ref. 1; CAA40473." evidence="16" ref="1">
    <original>M</original>
    <variation>I</variation>
    <location>
        <position position="456"/>
    </location>
</feature>
<evidence type="ECO:0000250" key="1">
    <source>
        <dbReference type="UniProtKB" id="P49759"/>
    </source>
</evidence>
<evidence type="ECO:0000255" key="2"/>
<evidence type="ECO:0000255" key="3">
    <source>
        <dbReference type="PROSITE-ProRule" id="PRU00159"/>
    </source>
</evidence>
<evidence type="ECO:0000255" key="4">
    <source>
        <dbReference type="PROSITE-ProRule" id="PRU10027"/>
    </source>
</evidence>
<evidence type="ECO:0000256" key="5">
    <source>
        <dbReference type="SAM" id="MobiDB-lite"/>
    </source>
</evidence>
<evidence type="ECO:0000269" key="6">
    <source>
    </source>
</evidence>
<evidence type="ECO:0000269" key="7">
    <source>
    </source>
</evidence>
<evidence type="ECO:0000269" key="8">
    <source>
    </source>
</evidence>
<evidence type="ECO:0000269" key="9">
    <source>
    </source>
</evidence>
<evidence type="ECO:0000269" key="10">
    <source>
    </source>
</evidence>
<evidence type="ECO:0000269" key="11">
    <source>
    </source>
</evidence>
<evidence type="ECO:0000303" key="12">
    <source>
    </source>
</evidence>
<evidence type="ECO:0000303" key="13">
    <source>
    </source>
</evidence>
<evidence type="ECO:0000303" key="14">
    <source>
    </source>
</evidence>
<evidence type="ECO:0000303" key="15">
    <source>
    </source>
</evidence>
<evidence type="ECO:0000305" key="16"/>
<evidence type="ECO:0000305" key="17">
    <source>
    </source>
</evidence>
<evidence type="ECO:0000312" key="18">
    <source>
        <dbReference type="MGI" id="MGI:107403"/>
    </source>
</evidence>
<evidence type="ECO:0007744" key="19">
    <source>
    </source>
</evidence>
<evidence type="ECO:0007744" key="20">
    <source>
    </source>
</evidence>